<keyword id="KW-0119">Carbohydrate metabolism</keyword>
<keyword id="KW-0326">Glycosidase</keyword>
<keyword id="KW-0378">Hydrolase</keyword>
<keyword id="KW-0964">Secreted</keyword>
<keyword id="KW-0732">Signal</keyword>
<evidence type="ECO:0000250" key="1">
    <source>
        <dbReference type="UniProtKB" id="P35475"/>
    </source>
</evidence>
<evidence type="ECO:0000255" key="2"/>
<evidence type="ECO:0000255" key="3">
    <source>
        <dbReference type="PROSITE-ProRule" id="PRU00523"/>
    </source>
</evidence>
<evidence type="ECO:0000269" key="4">
    <source>
    </source>
</evidence>
<evidence type="ECO:0000303" key="5">
    <source>
    </source>
</evidence>
<evidence type="ECO:0000305" key="6">
    <source>
    </source>
</evidence>
<evidence type="ECO:0000312" key="7">
    <source>
        <dbReference type="EMBL" id="GEA40621.1"/>
    </source>
</evidence>
<comment type="function">
    <text evidence="4">Hydrolase involved in the degradation of the gum arabic arabinogalactan protein (AGP) and larch AGP (PubMed:38047276). Catalyzes the release of 3-O-beta-L-arabinopyranosyl-L-arabinose (beta-L-Arap-(1-&gt;3)-L-Ara) from gum arabic AGP and larch AGP (PubMed:38047276). Also cleaves a small amount of beta-L-Arap-(1-&gt;3)-L-Ara from sugar beet arabinan, but wheat AGP cannot be used as a substrate (PubMed:38047276). Can also release 3-O-alpha-D-galactopyranosyl-L-arabinose (alpha-D-Galp-(1-&gt;3)-L-Ara) from gum arabic AGP, with low efficiency (PubMed:38047276).</text>
</comment>
<comment type="catalytic activity">
    <reaction evidence="4">
        <text>Hydrolysis of beta-L-Arap-(1-&gt;3)-L-Araf disaccharides from non-reducing terminals in branches of type II arabinogalactan attached to proteins.</text>
        <dbReference type="EC" id="3.2.1.223"/>
    </reaction>
</comment>
<comment type="biophysicochemical properties">
    <kinetics>
        <KM evidence="4">4.22 mg/ml for larch AGP</KM>
        <text evidence="4">kcat is 63.2 sec(-1) with larch AGP as substrate.</text>
    </kinetics>
    <phDependence>
        <text evidence="4">Optimum pH is 6.5.</text>
    </phDependence>
    <temperatureDependence>
        <text evidence="4">Optimum temperature is 35-45 degrees Celsius.</text>
    </temperatureDependence>
</comment>
<comment type="subcellular location">
    <subcellularLocation>
        <location evidence="4">Secreted</location>
    </subcellularLocation>
</comment>
<comment type="similarity">
    <text evidence="6">Belongs to the glycosyl hydrolase 39 family.</text>
</comment>
<protein>
    <recommendedName>
        <fullName evidence="5">3-O-beta-L-arabinopyranosyl-alpha-L-arabinofuranosidase</fullName>
        <shortName evidence="5">AAfase</shortName>
        <ecNumber evidence="4">3.2.1.223</ecNumber>
    </recommendedName>
</protein>
<dbReference type="EC" id="3.2.1.223" evidence="4"/>
<dbReference type="EMBL" id="BJLC01000001">
    <property type="protein sequence ID" value="GEA40621.1"/>
    <property type="molecule type" value="Genomic_DNA"/>
</dbReference>
<dbReference type="RefSeq" id="WP_051662128.1">
    <property type="nucleotide sequence ID" value="NZ_QSSM01000002.1"/>
</dbReference>
<dbReference type="SMR" id="P0DXG1"/>
<dbReference type="GO" id="GO:0005576">
    <property type="term" value="C:extracellular region"/>
    <property type="evidence" value="ECO:0007669"/>
    <property type="project" value="UniProtKB-SubCell"/>
</dbReference>
<dbReference type="GO" id="GO:0016798">
    <property type="term" value="F:hydrolase activity, acting on glycosyl bonds"/>
    <property type="evidence" value="ECO:0007669"/>
    <property type="project" value="UniProtKB-KW"/>
</dbReference>
<dbReference type="Gene3D" id="2.60.120.260">
    <property type="entry name" value="Galactose-binding domain-like"/>
    <property type="match status" value="3"/>
</dbReference>
<dbReference type="Gene3D" id="3.20.20.80">
    <property type="entry name" value="Glycosidases"/>
    <property type="match status" value="1"/>
</dbReference>
<dbReference type="InterPro" id="IPR008979">
    <property type="entry name" value="Galactose-bd-like_sf"/>
</dbReference>
<dbReference type="InterPro" id="IPR017853">
    <property type="entry name" value="Glycoside_hydrolase_SF"/>
</dbReference>
<dbReference type="SUPFAM" id="SSF51445">
    <property type="entry name" value="(Trans)glycosidases"/>
    <property type="match status" value="1"/>
</dbReference>
<dbReference type="SUPFAM" id="SSF49785">
    <property type="entry name" value="Galactose-binding domain-like"/>
    <property type="match status" value="1"/>
</dbReference>
<gene>
    <name evidence="7" type="ORF">DN0207_06030</name>
    <name evidence="5" type="ORF">MCC10289_0425</name>
</gene>
<organism>
    <name type="scientific">Bifidobacterium pseudocatenulatum</name>
    <dbReference type="NCBI Taxonomy" id="28026"/>
    <lineage>
        <taxon>Bacteria</taxon>
        <taxon>Bacillati</taxon>
        <taxon>Actinomycetota</taxon>
        <taxon>Actinomycetes</taxon>
        <taxon>Bifidobacteriales</taxon>
        <taxon>Bifidobacteriaceae</taxon>
        <taxon>Bifidobacterium</taxon>
    </lineage>
</organism>
<proteinExistence type="evidence at protein level"/>
<reference evidence="7" key="1">
    <citation type="submission" date="2019-06" db="EMBL/GenBank/DDBJ databases">
        <title>Draft genome sequence of Bifidobacterium pseudocatenulatum NBRC 113353.</title>
        <authorList>
            <person name="Miura T."/>
            <person name="Furukawa M."/>
            <person name="Shimamura M."/>
            <person name="Ohyama Y."/>
            <person name="Yamazoe A."/>
            <person name="Kawasaki H."/>
        </authorList>
    </citation>
    <scope>NUCLEOTIDE SEQUENCE [LARGE SCALE GENOMIC DNA]</scope>
    <source>
        <strain>NBRC 113353</strain>
    </source>
</reference>
<reference key="2">
    <citation type="journal article" date="2023" name="Microbiome Res. Rep.">
        <title>Assimilation of arabinogalactan side chains with novel 3-O-beta-L-arabinopyranosyl-alpha-L-arabinofuranosidase in Bifidobacterium pseudocatenulatum.</title>
        <authorList>
            <person name="Sasaki Y."/>
            <person name="Yanagita M."/>
            <person name="Hashiguchi M."/>
            <person name="Horigome A."/>
            <person name="Xiao J.Z."/>
            <person name="Odamaki T."/>
            <person name="Kitahara K."/>
            <person name="Fujita K."/>
        </authorList>
    </citation>
    <scope>FUNCTION</scope>
    <scope>CATALYTIC ACTIVITY</scope>
    <scope>BIOPHYSICOCHEMICAL PROPERTIES</scope>
    <scope>SUBCELLULAR LOCATION</scope>
    <source>
        <strain>MCC10289</strain>
    </source>
</reference>
<name>AAASE_BIFPS</name>
<feature type="signal peptide" evidence="2">
    <location>
        <begin position="1"/>
        <end position="28"/>
    </location>
</feature>
<feature type="chain" id="PRO_0000461470" description="3-O-beta-L-arabinopyranosyl-alpha-L-arabinofuranosidase">
    <location>
        <begin position="29"/>
        <end position="976"/>
    </location>
</feature>
<feature type="domain" description="CBM6" evidence="3">
    <location>
        <begin position="519"/>
        <end position="654"/>
    </location>
</feature>
<feature type="active site" description="Proton donor" evidence="1">
    <location>
        <position position="190"/>
    </location>
</feature>
<feature type="active site" description="Nucleophile" evidence="1">
    <location>
        <position position="315"/>
    </location>
</feature>
<feature type="site" description="Important for substrate specificity" evidence="6">
    <location>
        <position position="116"/>
    </location>
</feature>
<accession>P0DXG1</accession>
<sequence>MSHRNKALVAIVAGTALLISSGAAIGQAAIADERSGKAMQTLNVDFATETGNFRGGASGTLYGLGDDGSPADAILDGAQVENSSQKPPSGTQHPSGDALALENQFFSNGGNELAVYMQDYYPDWSYNSGNRPSDSRTYVLDVPVDDPSYGTYTNGGDGVWDYEQVTEIVINKVLANTEHPDQYTFIPFNEPDGGNWYASGDNASAKIFRTFLSDWDSEYKLIQKIWQQYKNGEKPSKVKPTADHARVAGPGDCVYRQNRSSAFLSHAKSQNTLPDVFVWHELGKESLSSFRSHYESYRKLEKKYGINPIDVNITEYGELRDMSVPGQLIQWQSMFEDEKVQAETAYWNYAGNLSDNMARANSANAGWWQFKWYGDLRGAQTVKVSSDYMNKADSLQGIAAIDRTNKKATVLYGGANDANADQVKNDGSNIPVTVHLTGLDQNLFGSTVDVEVRENAFTGPDGVAATPRVVNALSDVDISSGTLDVTTTSVDRYASYQLIVTPHQDRVLSIDNAAAGRALLVEEVENTVLSGGAQTYIKTPWGDGWNYFMTSGNGDVGSFKTGSIASWTVDVPADGIYRFQVISGNTGFPGDNDVSVDGQSAGTIHFGAELAMKPAAKWLYRGSGEVLLRLKQGQHQIQLHGSSMDNTLDKFLLYQVSASDNSLDRIEYPADQFRLESGALLTYDQDGARGFASLNGGEAKLFAHAWESGYHSVKVVYTASRGDSMVLSVNGTSVTTITAESDGLQSSMVNVALSEGINKLELSGDAVSIRDITTCRDAADDSNAITLEAESLQLAGGAQTRENSASNASGYSYVTGLGKQFVTEESGAFGMGDQTRVVTLDTNNTPKIADAVRGTVTIPAGTIPAGKFNMVVRFSNDAFIGKHDYNPQIVDLGLQVRDGTANGEEVARGAFRYTYSDSNFLERAMTVETSGSALVLGNWDEPGVGAGAVSWGVGPNLDYVQFYPVMVGDVYHQSLA</sequence>